<dbReference type="EC" id="6.2.1.-" evidence="8"/>
<dbReference type="EMBL" id="DF938583">
    <property type="protein sequence ID" value="GAM84984.1"/>
    <property type="molecule type" value="Genomic_DNA"/>
</dbReference>
<dbReference type="SMR" id="A0A0S6XHF8"/>
<dbReference type="STRING" id="1603295.A0A0S6XHF8"/>
<dbReference type="OrthoDB" id="6509636at2759"/>
<dbReference type="Proteomes" id="UP000054361">
    <property type="component" value="Unassembled WGS sequence"/>
</dbReference>
<dbReference type="GO" id="GO:0005524">
    <property type="term" value="F:ATP binding"/>
    <property type="evidence" value="ECO:0007669"/>
    <property type="project" value="UniProtKB-KW"/>
</dbReference>
<dbReference type="GO" id="GO:0016405">
    <property type="term" value="F:CoA-ligase activity"/>
    <property type="evidence" value="ECO:0007669"/>
    <property type="project" value="TreeGrafter"/>
</dbReference>
<dbReference type="Gene3D" id="3.30.300.30">
    <property type="match status" value="1"/>
</dbReference>
<dbReference type="Gene3D" id="3.40.50.12780">
    <property type="entry name" value="N-terminal domain of ligase-like"/>
    <property type="match status" value="1"/>
</dbReference>
<dbReference type="InterPro" id="IPR025110">
    <property type="entry name" value="AMP-bd_C"/>
</dbReference>
<dbReference type="InterPro" id="IPR045851">
    <property type="entry name" value="AMP-bd_C_sf"/>
</dbReference>
<dbReference type="InterPro" id="IPR000873">
    <property type="entry name" value="AMP-dep_synth/lig_dom"/>
</dbReference>
<dbReference type="InterPro" id="IPR042099">
    <property type="entry name" value="ANL_N_sf"/>
</dbReference>
<dbReference type="PANTHER" id="PTHR24096:SF422">
    <property type="entry name" value="BCDNA.GH02901"/>
    <property type="match status" value="1"/>
</dbReference>
<dbReference type="PANTHER" id="PTHR24096">
    <property type="entry name" value="LONG-CHAIN-FATTY-ACID--COA LIGASE"/>
    <property type="match status" value="1"/>
</dbReference>
<dbReference type="Pfam" id="PF00501">
    <property type="entry name" value="AMP-binding"/>
    <property type="match status" value="1"/>
</dbReference>
<dbReference type="Pfam" id="PF13193">
    <property type="entry name" value="AMP-binding_C"/>
    <property type="match status" value="1"/>
</dbReference>
<dbReference type="SUPFAM" id="SSF56801">
    <property type="entry name" value="Acetyl-CoA synthetase-like"/>
    <property type="match status" value="1"/>
</dbReference>
<feature type="chain" id="PRO_0000454572" description="Acyl-CoA ligase frbB">
    <location>
        <begin position="1"/>
        <end position="561"/>
    </location>
</feature>
<feature type="region of interest" description="SBD1" evidence="2">
    <location>
        <begin position="284"/>
        <end position="354"/>
    </location>
</feature>
<feature type="region of interest" description="SBD2" evidence="2">
    <location>
        <begin position="355"/>
        <end position="417"/>
    </location>
</feature>
<feature type="binding site" evidence="1">
    <location>
        <begin position="213"/>
        <end position="221"/>
    </location>
    <ligand>
        <name>ATP</name>
        <dbReference type="ChEBI" id="CHEBI:30616"/>
    </ligand>
</feature>
<feature type="binding site" evidence="1">
    <location>
        <begin position="354"/>
        <end position="359"/>
    </location>
    <ligand>
        <name>ATP</name>
        <dbReference type="ChEBI" id="CHEBI:30616"/>
    </ligand>
</feature>
<feature type="binding site" evidence="1">
    <location>
        <position position="437"/>
    </location>
    <ligand>
        <name>ATP</name>
        <dbReference type="ChEBI" id="CHEBI:30616"/>
    </ligand>
</feature>
<feature type="binding site" evidence="1">
    <location>
        <position position="456"/>
    </location>
    <ligand>
        <name>ATP</name>
        <dbReference type="ChEBI" id="CHEBI:30616"/>
    </ligand>
</feature>
<feature type="binding site" evidence="1">
    <location>
        <position position="551"/>
    </location>
    <ligand>
        <name>ATP</name>
        <dbReference type="ChEBI" id="CHEBI:30616"/>
    </ligand>
</feature>
<evidence type="ECO:0000250" key="1">
    <source>
        <dbReference type="UniProtKB" id="Q08AH3"/>
    </source>
</evidence>
<evidence type="ECO:0000250" key="2">
    <source>
        <dbReference type="UniProtKB" id="Q42524"/>
    </source>
</evidence>
<evidence type="ECO:0000269" key="3">
    <source>
    </source>
</evidence>
<evidence type="ECO:0000269" key="4">
    <source>
    </source>
</evidence>
<evidence type="ECO:0000269" key="5">
    <source>
    </source>
</evidence>
<evidence type="ECO:0000303" key="6">
    <source>
    </source>
</evidence>
<evidence type="ECO:0000305" key="7"/>
<evidence type="ECO:0000305" key="8">
    <source>
    </source>
</evidence>
<proteinExistence type="evidence at protein level"/>
<name>FRBC_DOTX1</name>
<comment type="function">
    <text evidence="5 8">Acyl-CoA ligase; part of the gene cluster that mediates the biosynthesis of the antifungal antibiotic FR901469, an inhibitor of beta-1,3-glucansynthase, exerting antifungal activity against the pathogenes Candida albicans and Aspergillus fumigatus (PubMed:27660098). FR901469 is a cyclic depsipeptide containing 12 amino acid residues and a fatty acid chain (PubMed:27660098). The NRPS frbI contains 12 modules responsible for the formation of the depsipeptide backbone which is denoted as Acyl-Thr-Ala-Tyr-Val-4OHPro-Thr-Thr-3OHPro-threo3OHGln-Gly-Thr-Orn-OH (C71H116N14O23) (Probable). The PKS frbB is probably involved in the production of the hydrocarbon chain, and the acyl-CoA ligase frbC might be involved in the transport of the chain to the peptide ptoduct of frbI (Probable). Because FR901469 contains 3 hydroxylated amino acid residues, the 3 oxygenases frbA, frbH, and frbJ might be participating in amino acid hydroxylation (Probable). As no thioesterase domains were detected in frbI or frbB, the thioesterases frbD and frbE may instead release and cyclize the products of the NRPS and PKS, respectively (Probable).</text>
</comment>
<comment type="pathway">
    <text evidence="8">Antifungal biosynthesis.</text>
</comment>
<comment type="induction">
    <text evidence="5">Expression is positively regulated by the cluster-specific transcription factor frbF.</text>
</comment>
<comment type="domain">
    <text evidence="2">Both substrate-binding domains (SBD1 and SBD2) are involved in the substrate recognition, and are sufficient to confer the substrate specificity.</text>
</comment>
<comment type="biotechnology">
    <text evidence="3 4">FR901469 inhibits the activity of 1,3-beta-glucan synthase from Candida albicans and Aspergillus fumigatus (PubMed:11099224, PubMed:11099225). With minimal inhibitory concentrations (MICs) against Candida albicans and Aspergillus fumigatus of 0.63 ug/ml and 0.16 ug/ml, repectively, FR901469 displays greater inhibitory activity than other 1,3-beta-glucan synthase inhibitors such as, WF11899A, echinocandin B, aculeacin A, and papulacandin B (PubMed:11099224, PubMed:11099225).</text>
</comment>
<comment type="similarity">
    <text evidence="7">Belongs to the ATP-dependent AMP-binding enzyme family.</text>
</comment>
<protein>
    <recommendedName>
        <fullName evidence="6">Acyl-CoA ligase frbB</fullName>
        <ecNumber evidence="8">6.2.1.-</ecNumber>
    </recommendedName>
    <alternativeName>
        <fullName evidence="6">FR901469 biosynthesis cluster protein B</fullName>
    </alternativeName>
</protein>
<gene>
    <name evidence="6" type="primary">frbC</name>
    <name type="ORF">ANO11243_029870</name>
</gene>
<keyword id="KW-0067">ATP-binding</keyword>
<keyword id="KW-0436">Ligase</keyword>
<keyword id="KW-0547">Nucleotide-binding</keyword>
<keyword id="KW-1185">Reference proteome</keyword>
<sequence length="561" mass="61133">MVIFKSPLPVGQHQSLEVIAPVGELALNVHLALAKQHEVKPPFIDVMSGKAWHAEEIRDRVDHLARVLAKQFGWQPNVGTPWDKVVAIYSYNTVDFIILSWAVHRLGGLCLLLHSTSSAGEIAAHLKRVQCAAIFTNEPLLATTRKARELLNGEPQKIFILDVANELLPEGHVNSDLTTVEQLAQKGAELEALEPLKWDAVNGRDQVAYLCPTSGTSGAQKLAKVTHGGLLANAVQTVAHELKTNQGKTEVGLNFLPCSHIYGMMLSHTMATRGDCMVLHPFFDLKRVLGSIARFRIERLYLVPSIISALTRNPFLLDMVDLSSVTSVVTGAAPFGSSLADGLHTLRPKWHLQPGWGLTEGGGASSLTPKDDFVPGSSGVLLPLTEVRLIGEDGKDAEGHEVRGEIYMKSPSVIAGYLEDANTQNPFTEDGWLRTGDIGMFKVSPKGVEHLWVVDRVKDMIKVKGMQVAPAELEAHLLLLPQIAEVAVIGVADKISGERPKAFIVQAKNAGPEEQLRETINQHVEATLSEPHWLGKRIEFVNDLPKTSSGKAMKSVLRAKA</sequence>
<organism>
    <name type="scientific">Dothideomycetidae sp. (strain 11243)</name>
    <name type="common">Fungal sp. (strain No.11243)</name>
    <dbReference type="NCBI Taxonomy" id="1603295"/>
    <lineage>
        <taxon>Eukaryota</taxon>
        <taxon>Fungi</taxon>
        <taxon>Dikarya</taxon>
        <taxon>Ascomycota</taxon>
        <taxon>Pezizomycotina</taxon>
        <taxon>Dothideomycetes</taxon>
        <taxon>Dothideomycetidae</taxon>
    </lineage>
</organism>
<accession>A0A0S6XHF8</accession>
<reference key="1">
    <citation type="journal article" date="2015" name="Genome Announc.">
        <title>Genome sequence of fungal species No.11243, which produces the antifungal antibiotic FR901469.</title>
        <authorList>
            <person name="Matsui M."/>
            <person name="Yokoyama T."/>
            <person name="Nemoto K."/>
            <person name="Kumagai T."/>
            <person name="Terai G."/>
            <person name="Arita M."/>
            <person name="Machida M."/>
            <person name="Shibata T."/>
        </authorList>
    </citation>
    <scope>NUCLEOTIDE SEQUENCE [LARGE SCALE GENOMIC DNA]</scope>
</reference>
<reference key="2">
    <citation type="journal article" date="2000" name="J. Antibiot.">
        <title>FR901469, a novel antifungal antibiotic from an unidentified fungus No.11243. I. Taxonomy, fermentation, isolation, physico-chemical properties and biological properties.</title>
        <authorList>
            <person name="Fujie A."/>
            <person name="Iwamoto T."/>
            <person name="Muramatsu H."/>
            <person name="Okudaira T."/>
            <person name="Nitta K."/>
            <person name="Nakanishi T."/>
            <person name="Sakamoto K."/>
            <person name="Hori Y."/>
            <person name="Hino M."/>
            <person name="Hashimoto S."/>
            <person name="Okuhara M."/>
        </authorList>
    </citation>
    <scope>BIOTECHNOLOGY</scope>
</reference>
<reference key="3">
    <citation type="journal article" date="2000" name="J. Antibiot.">
        <title>FR901469, a novel antifungal antibiotic from an unidentified fungus No.11243. II. In vitro and in vivo activities.</title>
        <authorList>
            <person name="Fujie A."/>
            <person name="Iwamoto T."/>
            <person name="Muramatsu H."/>
            <person name="Okudaira T."/>
            <person name="Sato I."/>
            <person name="Furuta T."/>
            <person name="Tsurumi Y."/>
            <person name="Hori Y."/>
            <person name="Hino M."/>
            <person name="Hashimoto S."/>
            <person name="Okuhara M."/>
        </authorList>
    </citation>
    <scope>BIOTECHNOLOGY</scope>
</reference>
<reference key="4">
    <citation type="journal article" date="2017" name="J. Biosci. Bioeng.">
        <title>Identification of a putative FR901469 biosynthesis gene cluster in fungal sp. No. 11243 and enhancement of the productivity by overexpressing the transcription factor gene frbF.</title>
        <authorList>
            <person name="Matsui M."/>
            <person name="Yokoyama T."/>
            <person name="Nemoto K."/>
            <person name="Kumagai T."/>
            <person name="Terai G."/>
            <person name="Tamano K."/>
            <person name="Machida M."/>
            <person name="Shibata T."/>
        </authorList>
    </citation>
    <scope>FUNCTION</scope>
    <scope>INDUCTION</scope>
    <scope>PATHWAY</scope>
</reference>